<accession>B1LBN4</accession>
<keyword id="KW-0687">Ribonucleoprotein</keyword>
<keyword id="KW-0689">Ribosomal protein</keyword>
<keyword id="KW-0694">RNA-binding</keyword>
<keyword id="KW-0699">rRNA-binding</keyword>
<evidence type="ECO:0000255" key="1">
    <source>
        <dbReference type="HAMAP-Rule" id="MF_01309"/>
    </source>
</evidence>
<evidence type="ECO:0000305" key="2"/>
<dbReference type="EMBL" id="CP000969">
    <property type="protein sequence ID" value="ACB09732.1"/>
    <property type="molecule type" value="Genomic_DNA"/>
</dbReference>
<dbReference type="RefSeq" id="WP_012311093.1">
    <property type="nucleotide sequence ID" value="NC_010483.1"/>
</dbReference>
<dbReference type="SMR" id="B1LBN4"/>
<dbReference type="KEGG" id="trq:TRQ2_1388"/>
<dbReference type="HOGENOM" id="CLU_058591_0_2_0"/>
<dbReference type="Proteomes" id="UP000001687">
    <property type="component" value="Chromosome"/>
</dbReference>
<dbReference type="GO" id="GO:0022627">
    <property type="term" value="C:cytosolic small ribosomal subunit"/>
    <property type="evidence" value="ECO:0007669"/>
    <property type="project" value="TreeGrafter"/>
</dbReference>
<dbReference type="GO" id="GO:0003729">
    <property type="term" value="F:mRNA binding"/>
    <property type="evidence" value="ECO:0007669"/>
    <property type="project" value="UniProtKB-UniRule"/>
</dbReference>
<dbReference type="GO" id="GO:0019843">
    <property type="term" value="F:rRNA binding"/>
    <property type="evidence" value="ECO:0007669"/>
    <property type="project" value="UniProtKB-UniRule"/>
</dbReference>
<dbReference type="GO" id="GO:0003735">
    <property type="term" value="F:structural constituent of ribosome"/>
    <property type="evidence" value="ECO:0007669"/>
    <property type="project" value="InterPro"/>
</dbReference>
<dbReference type="GO" id="GO:0006412">
    <property type="term" value="P:translation"/>
    <property type="evidence" value="ECO:0007669"/>
    <property type="project" value="UniProtKB-UniRule"/>
</dbReference>
<dbReference type="CDD" id="cd02412">
    <property type="entry name" value="KH-II_30S_S3"/>
    <property type="match status" value="1"/>
</dbReference>
<dbReference type="FunFam" id="3.30.1140.32:FF:000014">
    <property type="entry name" value="30S ribosomal protein S3"/>
    <property type="match status" value="1"/>
</dbReference>
<dbReference type="FunFam" id="3.30.300.20:FF:000001">
    <property type="entry name" value="30S ribosomal protein S3"/>
    <property type="match status" value="1"/>
</dbReference>
<dbReference type="Gene3D" id="3.30.300.20">
    <property type="match status" value="1"/>
</dbReference>
<dbReference type="Gene3D" id="3.30.1140.32">
    <property type="entry name" value="Ribosomal protein S3, C-terminal domain"/>
    <property type="match status" value="1"/>
</dbReference>
<dbReference type="HAMAP" id="MF_01309_B">
    <property type="entry name" value="Ribosomal_uS3_B"/>
    <property type="match status" value="1"/>
</dbReference>
<dbReference type="InterPro" id="IPR004087">
    <property type="entry name" value="KH_dom"/>
</dbReference>
<dbReference type="InterPro" id="IPR015946">
    <property type="entry name" value="KH_dom-like_a/b"/>
</dbReference>
<dbReference type="InterPro" id="IPR004044">
    <property type="entry name" value="KH_dom_type_2"/>
</dbReference>
<dbReference type="InterPro" id="IPR009019">
    <property type="entry name" value="KH_sf_prok-type"/>
</dbReference>
<dbReference type="InterPro" id="IPR036419">
    <property type="entry name" value="Ribosomal_S3_C_sf"/>
</dbReference>
<dbReference type="InterPro" id="IPR005704">
    <property type="entry name" value="Ribosomal_uS3_bac-typ"/>
</dbReference>
<dbReference type="InterPro" id="IPR001351">
    <property type="entry name" value="Ribosomal_uS3_C"/>
</dbReference>
<dbReference type="InterPro" id="IPR018280">
    <property type="entry name" value="Ribosomal_uS3_CS"/>
</dbReference>
<dbReference type="NCBIfam" id="TIGR01009">
    <property type="entry name" value="rpsC_bact"/>
    <property type="match status" value="1"/>
</dbReference>
<dbReference type="PANTHER" id="PTHR11760">
    <property type="entry name" value="30S/40S RIBOSOMAL PROTEIN S3"/>
    <property type="match status" value="1"/>
</dbReference>
<dbReference type="PANTHER" id="PTHR11760:SF19">
    <property type="entry name" value="SMALL RIBOSOMAL SUBUNIT PROTEIN US3C"/>
    <property type="match status" value="1"/>
</dbReference>
<dbReference type="Pfam" id="PF07650">
    <property type="entry name" value="KH_2"/>
    <property type="match status" value="1"/>
</dbReference>
<dbReference type="Pfam" id="PF00189">
    <property type="entry name" value="Ribosomal_S3_C"/>
    <property type="match status" value="1"/>
</dbReference>
<dbReference type="SMART" id="SM00322">
    <property type="entry name" value="KH"/>
    <property type="match status" value="1"/>
</dbReference>
<dbReference type="SUPFAM" id="SSF54814">
    <property type="entry name" value="Prokaryotic type KH domain (KH-domain type II)"/>
    <property type="match status" value="1"/>
</dbReference>
<dbReference type="SUPFAM" id="SSF54821">
    <property type="entry name" value="Ribosomal protein S3 C-terminal domain"/>
    <property type="match status" value="1"/>
</dbReference>
<dbReference type="PROSITE" id="PS50823">
    <property type="entry name" value="KH_TYPE_2"/>
    <property type="match status" value="1"/>
</dbReference>
<dbReference type="PROSITE" id="PS00548">
    <property type="entry name" value="RIBOSOMAL_S3"/>
    <property type="match status" value="1"/>
</dbReference>
<protein>
    <recommendedName>
        <fullName evidence="1">Small ribosomal subunit protein uS3</fullName>
    </recommendedName>
    <alternativeName>
        <fullName evidence="2">30S ribosomal protein S3</fullName>
    </alternativeName>
</protein>
<proteinExistence type="inferred from homology"/>
<comment type="function">
    <text evidence="1">Binds the lower part of the 30S subunit head. Binds mRNA in the 70S ribosome, positioning it for translation.</text>
</comment>
<comment type="subunit">
    <text evidence="1">Part of the 30S ribosomal subunit. Forms a tight complex with proteins S10 and S14.</text>
</comment>
<comment type="similarity">
    <text evidence="1">Belongs to the universal ribosomal protein uS3 family.</text>
</comment>
<sequence length="209" mass="24094">MGQKVHPRGFRLGLSADWQAKWFNEKNYKEWLLEDEEIRKFIKNKYYHAGISEIYVERPDAERINITVKTARPGIIIGRKGAEITSLREELERKFNRRVVINIEEIKTPELDAQLVAESIASRIEKRASYKVAMKRAIMNAMRKGAQGIKVMVAGRLGGAEIARREWYLRGRLPLQKLKAIIDYGTATAWTKYGTIGIKVWIYKGDADI</sequence>
<reference key="1">
    <citation type="journal article" date="2011" name="J. Bacteriol.">
        <title>Genome sequence of Thermotoga sp. strain RQ2, a hyperthermophilic bacterium isolated from a geothermally heated region of the seafloor near Ribeira Quente, the Azores.</title>
        <authorList>
            <person name="Swithers K.S."/>
            <person name="DiPippo J.L."/>
            <person name="Bruce D.C."/>
            <person name="Detter C."/>
            <person name="Tapia R."/>
            <person name="Han S."/>
            <person name="Saunders E."/>
            <person name="Goodwin L.A."/>
            <person name="Han J."/>
            <person name="Woyke T."/>
            <person name="Pitluck S."/>
            <person name="Pennacchio L."/>
            <person name="Nolan M."/>
            <person name="Mikhailova N."/>
            <person name="Lykidis A."/>
            <person name="Land M.L."/>
            <person name="Brettin T."/>
            <person name="Stetter K.O."/>
            <person name="Nelson K.E."/>
            <person name="Gogarten J.P."/>
            <person name="Noll K.M."/>
        </authorList>
    </citation>
    <scope>NUCLEOTIDE SEQUENCE [LARGE SCALE GENOMIC DNA]</scope>
    <source>
        <strain>RQ2</strain>
    </source>
</reference>
<feature type="chain" id="PRO_1000141027" description="Small ribosomal subunit protein uS3">
    <location>
        <begin position="1"/>
        <end position="209"/>
    </location>
</feature>
<feature type="domain" description="KH type-2" evidence="1">
    <location>
        <begin position="38"/>
        <end position="107"/>
    </location>
</feature>
<gene>
    <name evidence="1" type="primary">rpsC</name>
    <name type="ordered locus">TRQ2_1388</name>
</gene>
<name>RS3_THESQ</name>
<organism>
    <name type="scientific">Thermotoga sp. (strain RQ2)</name>
    <dbReference type="NCBI Taxonomy" id="126740"/>
    <lineage>
        <taxon>Bacteria</taxon>
        <taxon>Thermotogati</taxon>
        <taxon>Thermotogota</taxon>
        <taxon>Thermotogae</taxon>
        <taxon>Thermotogales</taxon>
        <taxon>Thermotogaceae</taxon>
        <taxon>Thermotoga</taxon>
    </lineage>
</organism>